<keyword id="KW-0574">Periplasm</keyword>
<keyword id="KW-0732">Signal</keyword>
<keyword id="KW-0813">Transport</keyword>
<accession>Q8Z863</accession>
<accession>Q7C8T7</accession>
<gene>
    <name evidence="1" type="primary">gsiB</name>
    <name type="ordered locus">STY0888</name>
    <name type="ordered locus">t2040</name>
</gene>
<sequence length="512" mass="56552">MTQFITHKWLAALGLASSIAAFPALAAKDVVVAVGSNFTTLDPYDANDTLSQAVAKSFYQGLFGLDKDMKVKNVLAEGYTVSDDGLTYTITLRQGVKFQDGADFNAAAVKANLDRASNPDNHLKRYNLYKNIAKTEVVDPATVKITLKQPFSAFINILAHPATAMISPQALEKYGKDIGFHPVGTGPYQLETWNQTDFVKVKKFAGYWQQGLPKLDSITWRPVTDNNTRAAMLQTGEAQFAFPIPYEQAALLAKNKNLELVASPSIMQRYISMNVTQKPFDNPKVREALNYAINRQALVKVAFAGYATPATGVVPPSIAYAQSYQPWPYDPAKARELLKEAGYPDGFSTTLWSSHNHSTAQKVLQFTQQQLAQIGIKARITAMDAGQRAAEVEGKGQKESGVRMFYTGWSASTGEADWALSPLFASQNWPPTQFNTAFYSNKQVDSDLAAALKTNDPQEKTRLYKEAQDIIWKESPWIPLVVEKLVSAHSKNLTGFWIMPDTGFSFDDADLK</sequence>
<dbReference type="EMBL" id="AL513382">
    <property type="protein sequence ID" value="CAD05295.1"/>
    <property type="molecule type" value="Genomic_DNA"/>
</dbReference>
<dbReference type="EMBL" id="AE014613">
    <property type="protein sequence ID" value="AAO69652.1"/>
    <property type="molecule type" value="Genomic_DNA"/>
</dbReference>
<dbReference type="RefSeq" id="NP_455383.1">
    <property type="nucleotide sequence ID" value="NC_003198.1"/>
</dbReference>
<dbReference type="RefSeq" id="WP_000191432.1">
    <property type="nucleotide sequence ID" value="NZ_WSUR01000019.1"/>
</dbReference>
<dbReference type="SMR" id="Q8Z863"/>
<dbReference type="STRING" id="220341.gene:17584885"/>
<dbReference type="KEGG" id="stt:t2040"/>
<dbReference type="KEGG" id="sty:STY0888"/>
<dbReference type="PATRIC" id="fig|220341.7.peg.897"/>
<dbReference type="eggNOG" id="COG0747">
    <property type="taxonomic scope" value="Bacteria"/>
</dbReference>
<dbReference type="HOGENOM" id="CLU_017028_7_3_6"/>
<dbReference type="OMA" id="WKESPWV"/>
<dbReference type="OrthoDB" id="9801912at2"/>
<dbReference type="Proteomes" id="UP000000541">
    <property type="component" value="Chromosome"/>
</dbReference>
<dbReference type="Proteomes" id="UP000002670">
    <property type="component" value="Chromosome"/>
</dbReference>
<dbReference type="GO" id="GO:0043190">
    <property type="term" value="C:ATP-binding cassette (ABC) transporter complex"/>
    <property type="evidence" value="ECO:0007669"/>
    <property type="project" value="InterPro"/>
</dbReference>
<dbReference type="GO" id="GO:0030288">
    <property type="term" value="C:outer membrane-bounded periplasmic space"/>
    <property type="evidence" value="ECO:0007669"/>
    <property type="project" value="TreeGrafter"/>
</dbReference>
<dbReference type="GO" id="GO:1904680">
    <property type="term" value="F:peptide transmembrane transporter activity"/>
    <property type="evidence" value="ECO:0007669"/>
    <property type="project" value="TreeGrafter"/>
</dbReference>
<dbReference type="GO" id="GO:0042938">
    <property type="term" value="P:dipeptide transport"/>
    <property type="evidence" value="ECO:0007669"/>
    <property type="project" value="TreeGrafter"/>
</dbReference>
<dbReference type="CDD" id="cd08499">
    <property type="entry name" value="PBP2_Ylib_like"/>
    <property type="match status" value="1"/>
</dbReference>
<dbReference type="FunFam" id="3.10.105.10:FF:000003">
    <property type="entry name" value="Glutathione ABC transporter substrate-binding protein GsiB"/>
    <property type="match status" value="1"/>
</dbReference>
<dbReference type="FunFam" id="3.40.190.10:FF:000094">
    <property type="entry name" value="Glutathione ABC transporter substrate-binding protein GsiB"/>
    <property type="match status" value="1"/>
</dbReference>
<dbReference type="FunFam" id="3.90.76.10:FF:000003">
    <property type="entry name" value="Glutathione ABC transporter substrate-binding protein GsiB"/>
    <property type="match status" value="1"/>
</dbReference>
<dbReference type="Gene3D" id="3.90.76.10">
    <property type="entry name" value="Dipeptide-binding Protein, Domain 1"/>
    <property type="match status" value="1"/>
</dbReference>
<dbReference type="Gene3D" id="3.10.105.10">
    <property type="entry name" value="Dipeptide-binding Protein, Domain 3"/>
    <property type="match status" value="1"/>
</dbReference>
<dbReference type="Gene3D" id="3.40.190.10">
    <property type="entry name" value="Periplasmic binding protein-like II"/>
    <property type="match status" value="1"/>
</dbReference>
<dbReference type="InterPro" id="IPR030678">
    <property type="entry name" value="Peptide/Ni-bd"/>
</dbReference>
<dbReference type="InterPro" id="IPR039424">
    <property type="entry name" value="SBP_5"/>
</dbReference>
<dbReference type="InterPro" id="IPR000914">
    <property type="entry name" value="SBP_5_dom"/>
</dbReference>
<dbReference type="NCBIfam" id="NF011942">
    <property type="entry name" value="PRK15413.1"/>
    <property type="match status" value="1"/>
</dbReference>
<dbReference type="PANTHER" id="PTHR30290:SF32">
    <property type="entry name" value="GLUTATHIONE-BINDING PROTEIN GSIB"/>
    <property type="match status" value="1"/>
</dbReference>
<dbReference type="PANTHER" id="PTHR30290">
    <property type="entry name" value="PERIPLASMIC BINDING COMPONENT OF ABC TRANSPORTER"/>
    <property type="match status" value="1"/>
</dbReference>
<dbReference type="Pfam" id="PF00496">
    <property type="entry name" value="SBP_bac_5"/>
    <property type="match status" value="1"/>
</dbReference>
<dbReference type="PIRSF" id="PIRSF002741">
    <property type="entry name" value="MppA"/>
    <property type="match status" value="1"/>
</dbReference>
<dbReference type="SUPFAM" id="SSF53850">
    <property type="entry name" value="Periplasmic binding protein-like II"/>
    <property type="match status" value="1"/>
</dbReference>
<evidence type="ECO:0000250" key="1">
    <source>
        <dbReference type="UniProtKB" id="P75797"/>
    </source>
</evidence>
<evidence type="ECO:0000255" key="2"/>
<evidence type="ECO:0000305" key="3"/>
<proteinExistence type="inferred from homology"/>
<comment type="function">
    <text evidence="1">Part of the ABC transporter complex GsiABCD involved in glutathione import. Binds glutathione.</text>
</comment>
<comment type="subunit">
    <text evidence="1">The complex is composed of two ATP-binding proteins (GsiA), two transmembrane proteins (GsiC and GsiD) and a solute-binding protein (GsiB).</text>
</comment>
<comment type="subcellular location">
    <subcellularLocation>
        <location evidence="1">Periplasm</location>
    </subcellularLocation>
</comment>
<comment type="similarity">
    <text evidence="3">Belongs to the bacterial solute-binding protein 5 family.</text>
</comment>
<name>GSIB_SALTI</name>
<organism>
    <name type="scientific">Salmonella typhi</name>
    <dbReference type="NCBI Taxonomy" id="90370"/>
    <lineage>
        <taxon>Bacteria</taxon>
        <taxon>Pseudomonadati</taxon>
        <taxon>Pseudomonadota</taxon>
        <taxon>Gammaproteobacteria</taxon>
        <taxon>Enterobacterales</taxon>
        <taxon>Enterobacteriaceae</taxon>
        <taxon>Salmonella</taxon>
    </lineage>
</organism>
<feature type="signal peptide" evidence="2">
    <location>
        <begin position="1"/>
        <end position="26"/>
    </location>
</feature>
<feature type="chain" id="PRO_0000279980" description="Glutathione-binding protein GsiB">
    <location>
        <begin position="27"/>
        <end position="512"/>
    </location>
</feature>
<protein>
    <recommendedName>
        <fullName evidence="1">Glutathione-binding protein GsiB</fullName>
    </recommendedName>
</protein>
<reference key="1">
    <citation type="journal article" date="2001" name="Nature">
        <title>Complete genome sequence of a multiple drug resistant Salmonella enterica serovar Typhi CT18.</title>
        <authorList>
            <person name="Parkhill J."/>
            <person name="Dougan G."/>
            <person name="James K.D."/>
            <person name="Thomson N.R."/>
            <person name="Pickard D."/>
            <person name="Wain J."/>
            <person name="Churcher C.M."/>
            <person name="Mungall K.L."/>
            <person name="Bentley S.D."/>
            <person name="Holden M.T.G."/>
            <person name="Sebaihia M."/>
            <person name="Baker S."/>
            <person name="Basham D."/>
            <person name="Brooks K."/>
            <person name="Chillingworth T."/>
            <person name="Connerton P."/>
            <person name="Cronin A."/>
            <person name="Davis P."/>
            <person name="Davies R.M."/>
            <person name="Dowd L."/>
            <person name="White N."/>
            <person name="Farrar J."/>
            <person name="Feltwell T."/>
            <person name="Hamlin N."/>
            <person name="Haque A."/>
            <person name="Hien T.T."/>
            <person name="Holroyd S."/>
            <person name="Jagels K."/>
            <person name="Krogh A."/>
            <person name="Larsen T.S."/>
            <person name="Leather S."/>
            <person name="Moule S."/>
            <person name="O'Gaora P."/>
            <person name="Parry C."/>
            <person name="Quail M.A."/>
            <person name="Rutherford K.M."/>
            <person name="Simmonds M."/>
            <person name="Skelton J."/>
            <person name="Stevens K."/>
            <person name="Whitehead S."/>
            <person name="Barrell B.G."/>
        </authorList>
    </citation>
    <scope>NUCLEOTIDE SEQUENCE [LARGE SCALE GENOMIC DNA]</scope>
    <source>
        <strain>CT18</strain>
    </source>
</reference>
<reference key="2">
    <citation type="journal article" date="2003" name="J. Bacteriol.">
        <title>Comparative genomics of Salmonella enterica serovar Typhi strains Ty2 and CT18.</title>
        <authorList>
            <person name="Deng W."/>
            <person name="Liou S.-R."/>
            <person name="Plunkett G. III"/>
            <person name="Mayhew G.F."/>
            <person name="Rose D.J."/>
            <person name="Burland V."/>
            <person name="Kodoyianni V."/>
            <person name="Schwartz D.C."/>
            <person name="Blattner F.R."/>
        </authorList>
    </citation>
    <scope>NUCLEOTIDE SEQUENCE [LARGE SCALE GENOMIC DNA]</scope>
    <source>
        <strain>ATCC 700931 / Ty2</strain>
    </source>
</reference>